<evidence type="ECO:0000255" key="1"/>
<evidence type="ECO:0000256" key="2">
    <source>
        <dbReference type="SAM" id="MobiDB-lite"/>
    </source>
</evidence>
<evidence type="ECO:0000269" key="3">
    <source>
    </source>
</evidence>
<evidence type="ECO:0000269" key="4">
    <source>
    </source>
</evidence>
<evidence type="ECO:0000269" key="5">
    <source>
    </source>
</evidence>
<evidence type="ECO:0000269" key="6">
    <source>
    </source>
</evidence>
<evidence type="ECO:0000269" key="7">
    <source>
    </source>
</evidence>
<evidence type="ECO:0000269" key="8">
    <source>
    </source>
</evidence>
<evidence type="ECO:0000269" key="9">
    <source>
    </source>
</evidence>
<evidence type="ECO:0000269" key="10">
    <source>
    </source>
</evidence>
<evidence type="ECO:0000269" key="11">
    <source ref="3"/>
</evidence>
<evidence type="ECO:0000269" key="12">
    <source ref="4"/>
</evidence>
<evidence type="ECO:0000305" key="13"/>
<evidence type="ECO:0000305" key="14">
    <source>
    </source>
</evidence>
<evidence type="ECO:0007744" key="15">
    <source>
    </source>
</evidence>
<evidence type="ECO:0007744" key="16">
    <source>
    </source>
</evidence>
<evidence type="ECO:0007744" key="17">
    <source>
    </source>
</evidence>
<evidence type="ECO:0007829" key="18">
    <source>
        <dbReference type="PDB" id="3THW"/>
    </source>
</evidence>
<evidence type="ECO:0007829" key="19">
    <source>
        <dbReference type="PDB" id="3THX"/>
    </source>
</evidence>
<evidence type="ECO:0007829" key="20">
    <source>
        <dbReference type="PDB" id="8OLX"/>
    </source>
</evidence>
<evidence type="ECO:0007829" key="21">
    <source>
        <dbReference type="PDB" id="8OM9"/>
    </source>
</evidence>
<evidence type="ECO:0007829" key="22">
    <source>
        <dbReference type="PDB" id="8OMQ"/>
    </source>
</evidence>
<evidence type="ECO:0007829" key="23">
    <source>
        <dbReference type="PDB" id="8R7C"/>
    </source>
</evidence>
<evidence type="ECO:0007829" key="24">
    <source>
        <dbReference type="PDB" id="8R7E"/>
    </source>
</evidence>
<accession>P20585</accession>
<accession>A1L480</accession>
<accession>A1L482</accession>
<accession>A6NMM6</accession>
<accession>Q6PJT5</accession>
<accession>Q86UQ6</accession>
<accession>Q92867</accession>
<sequence>MSRRKPASGGLAASSSAPARQAVLSRFFQSTGSLKSTSSSTGAADQVDPGAAAAAAAAAAAAPPAPPAPAFPPQLPPHIATEIDRRKKRPLENDGPVKKKVKKVQQKEGGSDLGMSGNSEPKKCLRTRNVSKSLEKLKEFCCDSALPQSRVQTESLQERFAVLPKCTDFDDISLLHAKNAVSSEDSKRQINQKDTTLFDLSQFGSSNTSHENLQKTASKSANKRSKSIYTPLELQYIEMKQQHKDAVLCVECGYKYRFFGEDAEIAARELNIYCHLDHNFMTASIPTHRLFVHVRRLVAKGYKVGVVKQTETAALKAIGDNRSSLFSRKLTALYTKSTLIGEDVNPLIKLDDAVNVDEIMTDTSTSYLLCISENKENVRDKKKGNIFIGIVGVQPATGEVVFDSFQDSASRSELETRMSSLQPVELLLPSALSEQTEALIHRATSVSVQDDRIRVERMDNIYFEYSHAFQAVTEFYAKDTVDIKGSQIISGIVNLEKPVICSLAAIIKYLKEFNLEKMLSKPENFKQLSSKMEFMTINGTTLRNLEILQNQTDMKTKGSLLWVLDHTKTSFGRRKLKKWVTQPLLKLREINARLDAVSEVLHSESSVFGQIENHLRKLPDIERGLCSIYHKKCSTQEFFLIVKTLYHLKSEFQAIIPAVNSHIQSDLLRTVILEIPELLSPVEHYLKILNEQAAKVGDKTELFKDLSDFPLIKKRKDEIQGVIDEIRMHLQEIRKILKNPSAQYVTVSGQEFMIEIKNSAVSCIPTDWVKVGSTKAVSRFHSPFIVENYRHLNQLREQLVLDCSAEWLDFLEKFSEHYHSLCKAVHHLATVDCIFSLAKVAKQGDYCRPTVQEERKIVIKNGRHPVIDVLLGEQDQYVPNNTDLSEDSERVMIITGPNMGGKSSYIKQVALITIMAQIGSYVPAEEATIGIVDGIFTRMGAADNIYKGQSTFMEELTDTAEIIRKATSQSLVILDELGRGTSTHDGIAIAYATLEYFIRDVKSLTLFVTHYPPVCELEKNYSHQVGNYHMGFLVSEDESKLDPGAAEQVPDFVTFLYQITRGIAARSYGLNVAKLADVPGEILKKAAHKSKELEGLINTKRKRLKYFAKLWTMHNAQDLQKWTEEFNMEETQTSLLH</sequence>
<protein>
    <recommendedName>
        <fullName>DNA mismatch repair protein Msh3</fullName>
        <shortName>hMSH3</shortName>
    </recommendedName>
    <alternativeName>
        <fullName>Divergent upstream protein</fullName>
        <shortName>DUP</shortName>
    </alternativeName>
    <alternativeName>
        <fullName>Mismatch repair protein 1</fullName>
        <shortName>MRP1</shortName>
    </alternativeName>
</protein>
<dbReference type="EMBL" id="J04810">
    <property type="protein sequence ID" value="AAB47281.1"/>
    <property type="molecule type" value="mRNA"/>
</dbReference>
<dbReference type="EMBL" id="U61981">
    <property type="protein sequence ID" value="AAB06045.1"/>
    <property type="molecule type" value="mRNA"/>
</dbReference>
<dbReference type="EMBL" id="D61419">
    <property type="protein sequence ID" value="BAD27111.1"/>
    <property type="molecule type" value="Genomic_DNA"/>
</dbReference>
<dbReference type="EMBL" id="AY275681">
    <property type="protein sequence ID" value="AAP13535.1"/>
    <property type="molecule type" value="Genomic_DNA"/>
</dbReference>
<dbReference type="EMBL" id="AC008434">
    <property type="status" value="NOT_ANNOTATED_CDS"/>
    <property type="molecule type" value="Genomic_DNA"/>
</dbReference>
<dbReference type="EMBL" id="AC010270">
    <property type="status" value="NOT_ANNOTATED_CDS"/>
    <property type="molecule type" value="Genomic_DNA"/>
</dbReference>
<dbReference type="EMBL" id="AC022493">
    <property type="status" value="NOT_ANNOTATED_CDS"/>
    <property type="molecule type" value="Genomic_DNA"/>
</dbReference>
<dbReference type="EMBL" id="BC011817">
    <property type="protein sequence ID" value="AAH11817.1"/>
    <property type="status" value="ALT_SEQ"/>
    <property type="molecule type" value="mRNA"/>
</dbReference>
<dbReference type="EMBL" id="BC130434">
    <property type="protein sequence ID" value="AAI30435.1"/>
    <property type="molecule type" value="mRNA"/>
</dbReference>
<dbReference type="EMBL" id="BC130436">
    <property type="protein sequence ID" value="AAI30437.1"/>
    <property type="molecule type" value="mRNA"/>
</dbReference>
<dbReference type="CCDS" id="CCDS34195.1"/>
<dbReference type="PIR" id="A33507">
    <property type="entry name" value="A33507"/>
</dbReference>
<dbReference type="RefSeq" id="NP_002430.3">
    <property type="nucleotide sequence ID" value="NM_002439.5"/>
</dbReference>
<dbReference type="PDB" id="3THW">
    <property type="method" value="X-ray"/>
    <property type="resolution" value="3.09 A"/>
    <property type="chains" value="B=219-1134"/>
</dbReference>
<dbReference type="PDB" id="3THX">
    <property type="method" value="X-ray"/>
    <property type="resolution" value="2.70 A"/>
    <property type="chains" value="B=219-1134"/>
</dbReference>
<dbReference type="PDB" id="3THY">
    <property type="method" value="X-ray"/>
    <property type="resolution" value="2.89 A"/>
    <property type="chains" value="B=219-1134"/>
</dbReference>
<dbReference type="PDB" id="3THZ">
    <property type="method" value="X-ray"/>
    <property type="resolution" value="4.30 A"/>
    <property type="chains" value="B=219-1134"/>
</dbReference>
<dbReference type="PDB" id="8OLX">
    <property type="method" value="EM"/>
    <property type="resolution" value="3.10 A"/>
    <property type="chains" value="B=1-1137"/>
</dbReference>
<dbReference type="PDB" id="8OM5">
    <property type="method" value="EM"/>
    <property type="resolution" value="3.52 A"/>
    <property type="chains" value="B=1-1137"/>
</dbReference>
<dbReference type="PDB" id="8OM9">
    <property type="method" value="EM"/>
    <property type="resolution" value="3.32 A"/>
    <property type="chains" value="B=1-1137"/>
</dbReference>
<dbReference type="PDB" id="8OMA">
    <property type="method" value="EM"/>
    <property type="resolution" value="3.29 A"/>
    <property type="chains" value="B=1-1137"/>
</dbReference>
<dbReference type="PDB" id="8OMO">
    <property type="method" value="EM"/>
    <property type="resolution" value="3.43 A"/>
    <property type="chains" value="B=1-1137"/>
</dbReference>
<dbReference type="PDB" id="8OMQ">
    <property type="method" value="EM"/>
    <property type="resolution" value="3.11 A"/>
    <property type="chains" value="B=1-1137"/>
</dbReference>
<dbReference type="PDB" id="8R7C">
    <property type="method" value="X-ray"/>
    <property type="resolution" value="2.82 A"/>
    <property type="chains" value="B/F=219-1134"/>
</dbReference>
<dbReference type="PDB" id="8R7E">
    <property type="method" value="X-ray"/>
    <property type="resolution" value="2.78 A"/>
    <property type="chains" value="B/F=219-1134"/>
</dbReference>
<dbReference type="PDB" id="8R7V">
    <property type="method" value="EM"/>
    <property type="resolution" value="3.12 A"/>
    <property type="chains" value="B=1-1137"/>
</dbReference>
<dbReference type="PDB" id="8RZ7">
    <property type="method" value="EM"/>
    <property type="resolution" value="3.37 A"/>
    <property type="chains" value="B=1-1137"/>
</dbReference>
<dbReference type="PDB" id="8RZ8">
    <property type="method" value="EM"/>
    <property type="resolution" value="3.06 A"/>
    <property type="chains" value="B=1-1137"/>
</dbReference>
<dbReference type="PDB" id="8RZ9">
    <property type="method" value="EM"/>
    <property type="resolution" value="3.02 A"/>
    <property type="chains" value="B=1-1137"/>
</dbReference>
<dbReference type="PDBsum" id="3THW"/>
<dbReference type="PDBsum" id="3THX"/>
<dbReference type="PDBsum" id="3THY"/>
<dbReference type="PDBsum" id="3THZ"/>
<dbReference type="PDBsum" id="8OLX"/>
<dbReference type="PDBsum" id="8OM5"/>
<dbReference type="PDBsum" id="8OM9"/>
<dbReference type="PDBsum" id="8OMA"/>
<dbReference type="PDBsum" id="8OMO"/>
<dbReference type="PDBsum" id="8OMQ"/>
<dbReference type="PDBsum" id="8R7C"/>
<dbReference type="PDBsum" id="8R7E"/>
<dbReference type="PDBsum" id="8R7V"/>
<dbReference type="PDBsum" id="8RZ7"/>
<dbReference type="PDBsum" id="8RZ8"/>
<dbReference type="PDBsum" id="8RZ9"/>
<dbReference type="EMDB" id="EMD-16964"/>
<dbReference type="EMDB" id="EMD-16969"/>
<dbReference type="EMDB" id="EMD-16971"/>
<dbReference type="EMDB" id="EMD-16972"/>
<dbReference type="EMDB" id="EMD-16973"/>
<dbReference type="EMDB" id="EMD-16974"/>
<dbReference type="EMDB" id="EMD-18992"/>
<dbReference type="EMDB" id="EMD-19605"/>
<dbReference type="EMDB" id="EMD-19606"/>
<dbReference type="EMDB" id="EMD-19607"/>
<dbReference type="SMR" id="P20585"/>
<dbReference type="BioGRID" id="110574">
    <property type="interactions" value="110"/>
</dbReference>
<dbReference type="ComplexPortal" id="CPX-77">
    <property type="entry name" value="DNA mismatch repair MutSbeta complex"/>
</dbReference>
<dbReference type="CORUM" id="P20585"/>
<dbReference type="DIP" id="DIP-35127N"/>
<dbReference type="FunCoup" id="P20585">
    <property type="interactions" value="1640"/>
</dbReference>
<dbReference type="IntAct" id="P20585">
    <property type="interactions" value="35"/>
</dbReference>
<dbReference type="MINT" id="P20585"/>
<dbReference type="STRING" id="9606.ENSP00000265081"/>
<dbReference type="GlyGen" id="P20585">
    <property type="glycosylation" value="1 site"/>
</dbReference>
<dbReference type="iPTMnet" id="P20585"/>
<dbReference type="PhosphoSitePlus" id="P20585"/>
<dbReference type="BioMuta" id="MSH3"/>
<dbReference type="DMDM" id="317373576"/>
<dbReference type="jPOST" id="P20585"/>
<dbReference type="MassIVE" id="P20585"/>
<dbReference type="PaxDb" id="9606-ENSP00000265081"/>
<dbReference type="PeptideAtlas" id="P20585"/>
<dbReference type="ProteomicsDB" id="53762"/>
<dbReference type="Pumba" id="P20585"/>
<dbReference type="Antibodypedia" id="24651">
    <property type="antibodies" value="285 antibodies from 34 providers"/>
</dbReference>
<dbReference type="CPTC" id="P20585">
    <property type="antibodies" value="1 antibody"/>
</dbReference>
<dbReference type="DNASU" id="4437"/>
<dbReference type="Ensembl" id="ENST00000265081.7">
    <property type="protein sequence ID" value="ENSP00000265081.6"/>
    <property type="gene ID" value="ENSG00000113318.11"/>
</dbReference>
<dbReference type="GeneID" id="4437"/>
<dbReference type="KEGG" id="hsa:4437"/>
<dbReference type="MANE-Select" id="ENST00000265081.7">
    <property type="protein sequence ID" value="ENSP00000265081.6"/>
    <property type="RefSeq nucleotide sequence ID" value="NM_002439.5"/>
    <property type="RefSeq protein sequence ID" value="NP_002430.3"/>
</dbReference>
<dbReference type="UCSC" id="uc003kgz.5">
    <property type="organism name" value="human"/>
</dbReference>
<dbReference type="AGR" id="HGNC:7326"/>
<dbReference type="CTD" id="4437"/>
<dbReference type="DisGeNET" id="4437"/>
<dbReference type="GeneCards" id="MSH3"/>
<dbReference type="HGNC" id="HGNC:7326">
    <property type="gene designation" value="MSH3"/>
</dbReference>
<dbReference type="HPA" id="ENSG00000113318">
    <property type="expression patterns" value="Low tissue specificity"/>
</dbReference>
<dbReference type="MalaCards" id="MSH3"/>
<dbReference type="MIM" id="600887">
    <property type="type" value="gene"/>
</dbReference>
<dbReference type="MIM" id="608089">
    <property type="type" value="phenotype"/>
</dbReference>
<dbReference type="MIM" id="617100">
    <property type="type" value="phenotype"/>
</dbReference>
<dbReference type="neXtProt" id="NX_P20585"/>
<dbReference type="OpenTargets" id="ENSG00000113318"/>
<dbReference type="Orphanet" id="480536">
    <property type="disease" value="MSH3-related attenuated familial adenomatous polyposis"/>
</dbReference>
<dbReference type="PharmGKB" id="PA31134"/>
<dbReference type="VEuPathDB" id="HostDB:ENSG00000113318"/>
<dbReference type="eggNOG" id="KOG0218">
    <property type="taxonomic scope" value="Eukaryota"/>
</dbReference>
<dbReference type="GeneTree" id="ENSGT00550000074949"/>
<dbReference type="HOGENOM" id="CLU_002472_0_1_1"/>
<dbReference type="InParanoid" id="P20585"/>
<dbReference type="OMA" id="INMHAAR"/>
<dbReference type="OrthoDB" id="121051at2759"/>
<dbReference type="PAN-GO" id="P20585">
    <property type="GO annotations" value="5 GO annotations based on evolutionary models"/>
</dbReference>
<dbReference type="PhylomeDB" id="P20585"/>
<dbReference type="TreeFam" id="TF300525"/>
<dbReference type="PathwayCommons" id="P20585"/>
<dbReference type="Reactome" id="R-HSA-5358606">
    <property type="pathway name" value="Mismatch repair (MMR) directed by MSH2:MSH3 (MutSbeta)"/>
</dbReference>
<dbReference type="Reactome" id="R-HSA-5632927">
    <property type="pathway name" value="Defective Mismatch Repair Associated With MSH3"/>
</dbReference>
<dbReference type="Reactome" id="R-HSA-5632928">
    <property type="pathway name" value="Defective Mismatch Repair Associated With MSH2"/>
</dbReference>
<dbReference type="SignaLink" id="P20585"/>
<dbReference type="BioGRID-ORCS" id="4437">
    <property type="hits" value="13 hits in 1155 CRISPR screens"/>
</dbReference>
<dbReference type="ChiTaRS" id="MSH3">
    <property type="organism name" value="human"/>
</dbReference>
<dbReference type="EvolutionaryTrace" id="P20585"/>
<dbReference type="GeneWiki" id="MSH3"/>
<dbReference type="GenomeRNAi" id="4437"/>
<dbReference type="Pharos" id="P20585">
    <property type="development level" value="Tbio"/>
</dbReference>
<dbReference type="PRO" id="PR:P20585"/>
<dbReference type="Proteomes" id="UP000005640">
    <property type="component" value="Chromosome 5"/>
</dbReference>
<dbReference type="RNAct" id="P20585">
    <property type="molecule type" value="protein"/>
</dbReference>
<dbReference type="Bgee" id="ENSG00000113318">
    <property type="expression patterns" value="Expressed in bronchial epithelial cell and 214 other cell types or tissues"/>
</dbReference>
<dbReference type="ExpressionAtlas" id="P20585">
    <property type="expression patterns" value="baseline and differential"/>
</dbReference>
<dbReference type="GO" id="GO:0016020">
    <property type="term" value="C:membrane"/>
    <property type="evidence" value="ECO:0007005"/>
    <property type="project" value="UniProtKB"/>
</dbReference>
<dbReference type="GO" id="GO:0032302">
    <property type="term" value="C:MutSbeta complex"/>
    <property type="evidence" value="ECO:0000314"/>
    <property type="project" value="HGNC-UCL"/>
</dbReference>
<dbReference type="GO" id="GO:0005654">
    <property type="term" value="C:nucleoplasm"/>
    <property type="evidence" value="ECO:0000304"/>
    <property type="project" value="Reactome"/>
</dbReference>
<dbReference type="GO" id="GO:0005634">
    <property type="term" value="C:nucleus"/>
    <property type="evidence" value="ECO:0000314"/>
    <property type="project" value="UniProtKB"/>
</dbReference>
<dbReference type="GO" id="GO:0005524">
    <property type="term" value="F:ATP binding"/>
    <property type="evidence" value="ECO:0007669"/>
    <property type="project" value="UniProtKB-KW"/>
</dbReference>
<dbReference type="GO" id="GO:0140664">
    <property type="term" value="F:ATP-dependent DNA damage sensor activity"/>
    <property type="evidence" value="ECO:0007669"/>
    <property type="project" value="InterPro"/>
</dbReference>
<dbReference type="GO" id="GO:0003690">
    <property type="term" value="F:double-stranded DNA binding"/>
    <property type="evidence" value="ECO:0000318"/>
    <property type="project" value="GO_Central"/>
</dbReference>
<dbReference type="GO" id="GO:0019899">
    <property type="term" value="F:enzyme binding"/>
    <property type="evidence" value="ECO:0000353"/>
    <property type="project" value="UniProtKB"/>
</dbReference>
<dbReference type="GO" id="GO:0030983">
    <property type="term" value="F:mismatched DNA binding"/>
    <property type="evidence" value="ECO:0007669"/>
    <property type="project" value="InterPro"/>
</dbReference>
<dbReference type="GO" id="GO:0006281">
    <property type="term" value="P:DNA repair"/>
    <property type="evidence" value="ECO:0000314"/>
    <property type="project" value="BHF-UCL"/>
</dbReference>
<dbReference type="GO" id="GO:0043570">
    <property type="term" value="P:maintenance of DNA repeat elements"/>
    <property type="evidence" value="ECO:0000315"/>
    <property type="project" value="HGNC-UCL"/>
</dbReference>
<dbReference type="GO" id="GO:0006298">
    <property type="term" value="P:mismatch repair"/>
    <property type="evidence" value="ECO:0000314"/>
    <property type="project" value="BHF-UCL"/>
</dbReference>
<dbReference type="GO" id="GO:0006312">
    <property type="term" value="P:mitotic recombination"/>
    <property type="evidence" value="ECO:0000318"/>
    <property type="project" value="GO_Central"/>
</dbReference>
<dbReference type="GO" id="GO:0045910">
    <property type="term" value="P:negative regulation of DNA recombination"/>
    <property type="evidence" value="ECO:0000314"/>
    <property type="project" value="BHF-UCL"/>
</dbReference>
<dbReference type="GO" id="GO:0016447">
    <property type="term" value="P:somatic recombination of immunoglobulin gene segments"/>
    <property type="evidence" value="ECO:0000318"/>
    <property type="project" value="GO_Central"/>
</dbReference>
<dbReference type="FunFam" id="1.10.1420.10:FF:000010">
    <property type="entry name" value="DNA mismatch repair protein"/>
    <property type="match status" value="1"/>
</dbReference>
<dbReference type="FunFam" id="3.30.420.110:FF:000005">
    <property type="entry name" value="DNA mismatch repair protein"/>
    <property type="match status" value="1"/>
</dbReference>
<dbReference type="FunFam" id="3.40.1170.10:FF:000004">
    <property type="entry name" value="DNA mismatch repair protein"/>
    <property type="match status" value="1"/>
</dbReference>
<dbReference type="FunFam" id="3.40.50.300:FF:000917">
    <property type="entry name" value="DNA mismatch repair protein"/>
    <property type="match status" value="1"/>
</dbReference>
<dbReference type="FunFam" id="1.10.1420.10:FF:000004">
    <property type="entry name" value="DNA mismatch repair protein Msh3"/>
    <property type="match status" value="1"/>
</dbReference>
<dbReference type="Gene3D" id="1.10.1420.10">
    <property type="match status" value="2"/>
</dbReference>
<dbReference type="Gene3D" id="3.40.1170.10">
    <property type="entry name" value="DNA repair protein MutS, domain I"/>
    <property type="match status" value="1"/>
</dbReference>
<dbReference type="Gene3D" id="3.30.420.110">
    <property type="entry name" value="MutS, connector domain"/>
    <property type="match status" value="1"/>
</dbReference>
<dbReference type="Gene3D" id="3.40.50.300">
    <property type="entry name" value="P-loop containing nucleotide triphosphate hydrolases"/>
    <property type="match status" value="1"/>
</dbReference>
<dbReference type="IDEAL" id="IID00612"/>
<dbReference type="InterPro" id="IPR007695">
    <property type="entry name" value="DNA_mismatch_repair_MutS-lik_N"/>
</dbReference>
<dbReference type="InterPro" id="IPR000432">
    <property type="entry name" value="DNA_mismatch_repair_MutS_C"/>
</dbReference>
<dbReference type="InterPro" id="IPR007696">
    <property type="entry name" value="DNA_mismatch_repair_MutS_core"/>
</dbReference>
<dbReference type="InterPro" id="IPR016151">
    <property type="entry name" value="DNA_mismatch_repair_MutS_N"/>
</dbReference>
<dbReference type="InterPro" id="IPR036187">
    <property type="entry name" value="DNA_mismatch_repair_MutS_sf"/>
</dbReference>
<dbReference type="InterPro" id="IPR007860">
    <property type="entry name" value="DNA_mmatch_repair_MutS_con_dom"/>
</dbReference>
<dbReference type="InterPro" id="IPR045076">
    <property type="entry name" value="MutS"/>
</dbReference>
<dbReference type="InterPro" id="IPR036678">
    <property type="entry name" value="MutS_con_dom_sf"/>
</dbReference>
<dbReference type="InterPro" id="IPR027417">
    <property type="entry name" value="P-loop_NTPase"/>
</dbReference>
<dbReference type="NCBIfam" id="NF003810">
    <property type="entry name" value="PRK05399.1"/>
    <property type="match status" value="1"/>
</dbReference>
<dbReference type="PANTHER" id="PTHR11361:SF122">
    <property type="entry name" value="DNA MISMATCH REPAIR PROTEIN MSH3"/>
    <property type="match status" value="1"/>
</dbReference>
<dbReference type="PANTHER" id="PTHR11361">
    <property type="entry name" value="DNA MISMATCH REPAIR PROTEIN MUTS FAMILY MEMBER"/>
    <property type="match status" value="1"/>
</dbReference>
<dbReference type="Pfam" id="PF01624">
    <property type="entry name" value="MutS_I"/>
    <property type="match status" value="1"/>
</dbReference>
<dbReference type="Pfam" id="PF05188">
    <property type="entry name" value="MutS_II"/>
    <property type="match status" value="1"/>
</dbReference>
<dbReference type="Pfam" id="PF05192">
    <property type="entry name" value="MutS_III"/>
    <property type="match status" value="1"/>
</dbReference>
<dbReference type="Pfam" id="PF00488">
    <property type="entry name" value="MutS_V"/>
    <property type="match status" value="1"/>
</dbReference>
<dbReference type="SMART" id="SM00534">
    <property type="entry name" value="MUTSac"/>
    <property type="match status" value="1"/>
</dbReference>
<dbReference type="SMART" id="SM00533">
    <property type="entry name" value="MUTSd"/>
    <property type="match status" value="1"/>
</dbReference>
<dbReference type="SUPFAM" id="SSF55271">
    <property type="entry name" value="DNA repair protein MutS, domain I"/>
    <property type="match status" value="1"/>
</dbReference>
<dbReference type="SUPFAM" id="SSF53150">
    <property type="entry name" value="DNA repair protein MutS, domain II"/>
    <property type="match status" value="1"/>
</dbReference>
<dbReference type="SUPFAM" id="SSF48334">
    <property type="entry name" value="DNA repair protein MutS, domain III"/>
    <property type="match status" value="1"/>
</dbReference>
<dbReference type="SUPFAM" id="SSF52540">
    <property type="entry name" value="P-loop containing nucleoside triphosphate hydrolases"/>
    <property type="match status" value="1"/>
</dbReference>
<dbReference type="PROSITE" id="PS00486">
    <property type="entry name" value="DNA_MISMATCH_REPAIR_2"/>
    <property type="match status" value="1"/>
</dbReference>
<comment type="function">
    <text>Component of the post-replicative DNA mismatch repair system (MMR). Heterodimerizes with MSH2 to form MutS beta which binds to DNA mismatches thereby initiating DNA repair. When bound, the MutS beta heterodimer bends the DNA helix and shields approximately 20 base pairs. MutS beta recognizes large insertion-deletion loops (IDL) up to 13 nucleotides long. After mismatch binding, forms a ternary complex with the MutL alpha heterodimer, which is thought to be responsible for directing the downstream MMR events, including strand discrimination, excision, and resynthesis.</text>
</comment>
<comment type="subunit">
    <text evidence="4 6 10">Component of the DNA mismatch repair (MMR) complex composed at least of MSH2, MSH3, MSH6, PMS1 and MLH1 (PubMed:26300262). Heterodimer consisting of MSH2-MSH3 (MutS beta) (PubMed:8942985). Forms a ternary complex with MutL alpha (MLH1-PMS1). Interacts with EXO1 (PubMed:11427529). Interacts with MCM9 (PubMed:26300262).</text>
</comment>
<comment type="interaction">
    <interactant intactId="EBI-1164205">
        <id>P20585</id>
    </interactant>
    <interactant intactId="EBI-744248">
        <id>P40692</id>
        <label>MLH1</label>
    </interactant>
    <organismsDiffer>false</organismsDiffer>
    <experiments>5</experiments>
</comment>
<comment type="interaction">
    <interactant intactId="EBI-1164205">
        <id>P20585</id>
    </interactant>
    <interactant intactId="EBI-355888">
        <id>P43246</id>
        <label>MSH2</label>
    </interactant>
    <organismsDiffer>false</organismsDiffer>
    <experiments>14</experiments>
</comment>
<comment type="interaction">
    <interactant intactId="EBI-1164205">
        <id>P20585</id>
    </interactant>
    <interactant intactId="EBI-358311">
        <id>P12004</id>
        <label>PCNA</label>
    </interactant>
    <organismsDiffer>false</organismsDiffer>
    <experiments>6</experiments>
</comment>
<comment type="disease" evidence="14">
    <disease id="DI-01526">
        <name>Endometrial cancer</name>
        <acronym>ENDMC</acronym>
        <description>A malignancy of endometrium, the mucous lining of the uterus. Most endometrial cancers are adenocarcinomas, cancers that begin in cells that make and release mucus and other fluids.</description>
        <dbReference type="MIM" id="608089"/>
    </disease>
    <text>Disease susceptibility is associated with variants affecting the gene represented in this entry.</text>
</comment>
<comment type="disease" evidence="8">
    <disease id="DI-04840">
        <name>Familial adenomatous polyposis 4</name>
        <acronym>FAP4</acronym>
        <description>A form of familial adenomatous polyposis, a condition characterized by the development of multiple colorectal adenomatous polyps, benign neoplasms derived from glandular epithelium. Some affected individuals may develop colorectal carcinoma. FAP4 inheritance is autosomal recessive.</description>
        <dbReference type="MIM" id="617100"/>
    </disease>
    <text>The disease is caused by variants affecting the gene represented in this entry.</text>
</comment>
<comment type="similarity">
    <text evidence="13">Belongs to the DNA mismatch repair MutS family. MSH3 subfamily.</text>
</comment>
<comment type="sequence caution" evidence="13">
    <conflict type="miscellaneous discrepancy">
        <sequence resource="EMBL-CDS" id="AAH11817"/>
    </conflict>
    <text>Contaminating sequence. Potential poly-A sequence.</text>
</comment>
<comment type="online information" name="Atlas of Genetics and Cytogenetics in Oncology and Haematology">
    <link uri="https://atlasgeneticsoncology.org/gene/341/MSH3"/>
</comment>
<proteinExistence type="evidence at protein level"/>
<name>MSH3_HUMAN</name>
<organism>
    <name type="scientific">Homo sapiens</name>
    <name type="common">Human</name>
    <dbReference type="NCBI Taxonomy" id="9606"/>
    <lineage>
        <taxon>Eukaryota</taxon>
        <taxon>Metazoa</taxon>
        <taxon>Chordata</taxon>
        <taxon>Craniata</taxon>
        <taxon>Vertebrata</taxon>
        <taxon>Euteleostomi</taxon>
        <taxon>Mammalia</taxon>
        <taxon>Eutheria</taxon>
        <taxon>Euarchontoglires</taxon>
        <taxon>Primates</taxon>
        <taxon>Haplorrhini</taxon>
        <taxon>Catarrhini</taxon>
        <taxon>Hominidae</taxon>
        <taxon>Homo</taxon>
    </lineage>
</organism>
<feature type="chain" id="PRO_0000115192" description="DNA mismatch repair protein Msh3">
    <location>
        <begin position="1"/>
        <end position="1137"/>
    </location>
</feature>
<feature type="region of interest" description="Disordered" evidence="2">
    <location>
        <begin position="31"/>
        <end position="122"/>
    </location>
</feature>
<feature type="region of interest" description="Interaction with EXO1" evidence="4">
    <location>
        <begin position="75"/>
        <end position="297"/>
    </location>
</feature>
<feature type="region of interest" description="Disordered" evidence="2">
    <location>
        <begin position="201"/>
        <end position="222"/>
    </location>
</feature>
<feature type="compositionally biased region" description="Low complexity" evidence="2">
    <location>
        <begin position="31"/>
        <end position="42"/>
    </location>
</feature>
<feature type="compositionally biased region" description="Low complexity" evidence="2">
    <location>
        <begin position="51"/>
        <end position="62"/>
    </location>
</feature>
<feature type="compositionally biased region" description="Pro residues" evidence="2">
    <location>
        <begin position="63"/>
        <end position="76"/>
    </location>
</feature>
<feature type="compositionally biased region" description="Basic and acidic residues" evidence="2">
    <location>
        <begin position="81"/>
        <end position="97"/>
    </location>
</feature>
<feature type="compositionally biased region" description="Polar residues" evidence="2">
    <location>
        <begin position="201"/>
        <end position="220"/>
    </location>
</feature>
<feature type="binding site" evidence="1">
    <location>
        <begin position="896"/>
        <end position="903"/>
    </location>
    <ligand>
        <name>ATP</name>
        <dbReference type="ChEBI" id="CHEBI:30616"/>
    </ligand>
</feature>
<feature type="modified residue" description="Phosphoserine" evidence="17">
    <location>
        <position position="33"/>
    </location>
</feature>
<feature type="modified residue" description="Phosphothreonine" evidence="15 16">
    <location>
        <position position="1099"/>
    </location>
</feature>
<feature type="sequence variant" id="VAR_020934" evidence="5 10">
    <location>
        <begin position="57"/>
        <end position="65"/>
    </location>
</feature>
<feature type="sequence variant" id="VAR_020935" evidence="9">
    <original>A</original>
    <variation>AAAA</variation>
    <location>
        <position position="62"/>
    </location>
</feature>
<feature type="sequence variant" id="VAR_020936" description="In dbSNP:rs1650697." evidence="3 5 7 10 11 12">
    <original>I</original>
    <variation>V</variation>
    <location>
        <position position="79"/>
    </location>
</feature>
<feature type="sequence variant" id="VAR_016160" description="In dbSNP:rs1805354." evidence="12">
    <original>F</original>
    <variation>L</variation>
    <location>
        <position position="709"/>
    </location>
</feature>
<feature type="sequence variant" id="VAR_055251" description="In dbSNP:rs10067975.">
    <original>Y</original>
    <variation>F</variation>
    <location>
        <position position="789"/>
    </location>
</feature>
<feature type="sequence variant" id="VAR_016161" description="In dbSNP:rs184967." evidence="5 7 10 11 12">
    <original>Q</original>
    <variation>R</variation>
    <location>
        <position position="949"/>
    </location>
</feature>
<feature type="sequence variant" id="VAR_016162" description="In dbSNP:rs26279." evidence="3 5 7 11 12">
    <original>A</original>
    <variation>T</variation>
    <location>
        <position position="1045"/>
    </location>
</feature>
<feature type="sequence variant" id="VAR_016163" description="In dbSNP:rs1805131.">
    <original>T</original>
    <variation>A</variation>
    <location>
        <position position="1054"/>
    </location>
</feature>
<feature type="sequence conflict" description="In Ref. 6; AAI30435." evidence="13" ref="6">
    <original>A</original>
    <variation>T</variation>
    <location>
        <position position="61"/>
    </location>
</feature>
<feature type="sequence conflict" description="In Ref. 1; AAB47281 and 3; BAD27111." evidence="13" ref="1 3">
    <original>E</original>
    <variation>G</variation>
    <location>
        <position position="622"/>
    </location>
</feature>
<feature type="helix" evidence="19">
    <location>
        <begin position="231"/>
        <end position="240"/>
    </location>
</feature>
<feature type="turn" evidence="19">
    <location>
        <begin position="241"/>
        <end position="245"/>
    </location>
</feature>
<feature type="strand" evidence="19">
    <location>
        <begin position="246"/>
        <end position="251"/>
    </location>
</feature>
<feature type="strand" evidence="19">
    <location>
        <begin position="253"/>
        <end position="259"/>
    </location>
</feature>
<feature type="helix" evidence="19">
    <location>
        <begin position="260"/>
        <end position="270"/>
    </location>
</feature>
<feature type="strand" evidence="19">
    <location>
        <begin position="275"/>
        <end position="277"/>
    </location>
</feature>
<feature type="strand" evidence="19">
    <location>
        <begin position="280"/>
        <end position="286"/>
    </location>
</feature>
<feature type="helix" evidence="19">
    <location>
        <begin position="287"/>
        <end position="289"/>
    </location>
</feature>
<feature type="helix" evidence="19">
    <location>
        <begin position="290"/>
        <end position="300"/>
    </location>
</feature>
<feature type="strand" evidence="19">
    <location>
        <begin position="304"/>
        <end position="309"/>
    </location>
</feature>
<feature type="helix" evidence="19">
    <location>
        <begin position="313"/>
        <end position="316"/>
    </location>
</feature>
<feature type="turn" evidence="24">
    <location>
        <begin position="320"/>
        <end position="323"/>
    </location>
</feature>
<feature type="strand" evidence="19">
    <location>
        <begin position="328"/>
        <end position="334"/>
    </location>
</feature>
<feature type="turn" evidence="19">
    <location>
        <begin position="342"/>
        <end position="344"/>
    </location>
</feature>
<feature type="strand" evidence="19">
    <location>
        <begin position="347"/>
        <end position="349"/>
    </location>
</feature>
<feature type="strand" evidence="19">
    <location>
        <begin position="354"/>
        <end position="356"/>
    </location>
</feature>
<feature type="strand" evidence="23">
    <location>
        <begin position="361"/>
        <end position="364"/>
    </location>
</feature>
<feature type="strand" evidence="19">
    <location>
        <begin position="368"/>
        <end position="374"/>
    </location>
</feature>
<feature type="turn" evidence="18">
    <location>
        <begin position="382"/>
        <end position="384"/>
    </location>
</feature>
<feature type="strand" evidence="19">
    <location>
        <begin position="386"/>
        <end position="393"/>
    </location>
</feature>
<feature type="turn" evidence="19">
    <location>
        <begin position="395"/>
        <end position="397"/>
    </location>
</feature>
<feature type="strand" evidence="19">
    <location>
        <begin position="400"/>
        <end position="407"/>
    </location>
</feature>
<feature type="helix" evidence="19">
    <location>
        <begin position="412"/>
        <end position="421"/>
    </location>
</feature>
<feature type="strand" evidence="19">
    <location>
        <begin position="424"/>
        <end position="431"/>
    </location>
</feature>
<feature type="helix" evidence="19">
    <location>
        <begin position="434"/>
        <end position="445"/>
    </location>
</feature>
<feature type="strand" evidence="19">
    <location>
        <begin position="449"/>
        <end position="451"/>
    </location>
</feature>
<feature type="strand" evidence="19">
    <location>
        <begin position="454"/>
        <end position="458"/>
    </location>
</feature>
<feature type="helix" evidence="19">
    <location>
        <begin position="460"/>
        <end position="462"/>
    </location>
</feature>
<feature type="helix" evidence="19">
    <location>
        <begin position="465"/>
        <end position="475"/>
    </location>
</feature>
<feature type="helix" evidence="23">
    <location>
        <begin position="490"/>
        <end position="493"/>
    </location>
</feature>
<feature type="helix" evidence="19">
    <location>
        <begin position="497"/>
        <end position="512"/>
    </location>
</feature>
<feature type="helix" evidence="19">
    <location>
        <begin position="516"/>
        <end position="519"/>
    </location>
</feature>
<feature type="helix" evidence="19">
    <location>
        <begin position="522"/>
        <end position="524"/>
    </location>
</feature>
<feature type="strand" evidence="19">
    <location>
        <begin position="525"/>
        <end position="528"/>
    </location>
</feature>
<feature type="turn" evidence="19">
    <location>
        <begin position="531"/>
        <end position="533"/>
    </location>
</feature>
<feature type="helix" evidence="19">
    <location>
        <begin position="539"/>
        <end position="544"/>
    </location>
</feature>
<feature type="strand" evidence="19">
    <location>
        <begin position="547"/>
        <end position="549"/>
    </location>
</feature>
<feature type="turn" evidence="19">
    <location>
        <begin position="551"/>
        <end position="553"/>
    </location>
</feature>
<feature type="strand" evidence="22">
    <location>
        <begin position="555"/>
        <end position="559"/>
    </location>
</feature>
<feature type="helix" evidence="19">
    <location>
        <begin position="560"/>
        <end position="564"/>
    </location>
</feature>
<feature type="helix" evidence="19">
    <location>
        <begin position="570"/>
        <end position="581"/>
    </location>
</feature>
<feature type="helix" evidence="19">
    <location>
        <begin position="587"/>
        <end position="601"/>
    </location>
</feature>
<feature type="helix" evidence="19">
    <location>
        <begin position="607"/>
        <end position="613"/>
    </location>
</feature>
<feature type="turn" evidence="19">
    <location>
        <begin position="614"/>
        <end position="617"/>
    </location>
</feature>
<feature type="helix" evidence="19">
    <location>
        <begin position="621"/>
        <end position="629"/>
    </location>
</feature>
<feature type="helix" evidence="19">
    <location>
        <begin position="635"/>
        <end position="661"/>
    </location>
</feature>
<feature type="helix" evidence="19">
    <location>
        <begin position="666"/>
        <end position="672"/>
    </location>
</feature>
<feature type="helix" evidence="19">
    <location>
        <begin position="674"/>
        <end position="678"/>
    </location>
</feature>
<feature type="helix" evidence="19">
    <location>
        <begin position="680"/>
        <end position="682"/>
    </location>
</feature>
<feature type="helix" evidence="19">
    <location>
        <begin position="683"/>
        <end position="686"/>
    </location>
</feature>
<feature type="helix" evidence="19">
    <location>
        <begin position="691"/>
        <end position="696"/>
    </location>
</feature>
<feature type="strand" evidence="20">
    <location>
        <begin position="699"/>
        <end position="701"/>
    </location>
</feature>
<feature type="strand" evidence="24">
    <location>
        <begin position="702"/>
        <end position="704"/>
    </location>
</feature>
<feature type="helix" evidence="19">
    <location>
        <begin position="706"/>
        <end position="708"/>
    </location>
</feature>
<feature type="helix" evidence="19">
    <location>
        <begin position="710"/>
        <end position="737"/>
    </location>
</feature>
<feature type="strand" evidence="19">
    <location>
        <begin position="745"/>
        <end position="747"/>
    </location>
</feature>
<feature type="strand" evidence="19">
    <location>
        <begin position="750"/>
        <end position="757"/>
    </location>
</feature>
<feature type="helix" evidence="23">
    <location>
        <begin position="758"/>
        <end position="760"/>
    </location>
</feature>
<feature type="helix" evidence="19">
    <location>
        <begin position="761"/>
        <end position="763"/>
    </location>
</feature>
<feature type="strand" evidence="21">
    <location>
        <begin position="766"/>
        <end position="768"/>
    </location>
</feature>
<feature type="strand" evidence="19">
    <location>
        <begin position="769"/>
        <end position="773"/>
    </location>
</feature>
<feature type="strand" evidence="19">
    <location>
        <begin position="775"/>
        <end position="781"/>
    </location>
</feature>
<feature type="helix" evidence="19">
    <location>
        <begin position="783"/>
        <end position="814"/>
    </location>
</feature>
<feature type="helix" evidence="19">
    <location>
        <begin position="815"/>
        <end position="817"/>
    </location>
</feature>
<feature type="helix" evidence="19">
    <location>
        <begin position="818"/>
        <end position="841"/>
    </location>
</feature>
<feature type="strand" evidence="19">
    <location>
        <begin position="843"/>
        <end position="845"/>
    </location>
</feature>
<feature type="strand" evidence="19">
    <location>
        <begin position="850"/>
        <end position="854"/>
    </location>
</feature>
<feature type="strand" evidence="19">
    <location>
        <begin position="856"/>
        <end position="862"/>
    </location>
</feature>
<feature type="helix" evidence="19">
    <location>
        <begin position="865"/>
        <end position="870"/>
    </location>
</feature>
<feature type="strand" evidence="19">
    <location>
        <begin position="875"/>
        <end position="877"/>
    </location>
</feature>
<feature type="strand" evidence="19">
    <location>
        <begin position="880"/>
        <end position="884"/>
    </location>
</feature>
<feature type="strand" evidence="23">
    <location>
        <begin position="886"/>
        <end position="888"/>
    </location>
</feature>
<feature type="strand" evidence="19">
    <location>
        <begin position="891"/>
        <end position="896"/>
    </location>
</feature>
<feature type="helix" evidence="19">
    <location>
        <begin position="900"/>
        <end position="917"/>
    </location>
</feature>
<feature type="strand" evidence="19">
    <location>
        <begin position="922"/>
        <end position="930"/>
    </location>
</feature>
<feature type="strand" evidence="19">
    <location>
        <begin position="933"/>
        <end position="938"/>
    </location>
</feature>
<feature type="helix" evidence="22">
    <location>
        <begin position="945"/>
        <end position="947"/>
    </location>
</feature>
<feature type="helix" evidence="19">
    <location>
        <begin position="952"/>
        <end position="965"/>
    </location>
</feature>
<feature type="strand" evidence="19">
    <location>
        <begin position="971"/>
        <end position="976"/>
    </location>
</feature>
<feature type="turn" evidence="19">
    <location>
        <begin position="977"/>
        <end position="980"/>
    </location>
</feature>
<feature type="helix" evidence="19">
    <location>
        <begin position="983"/>
        <end position="999"/>
    </location>
</feature>
<feature type="strand" evidence="19">
    <location>
        <begin position="1004"/>
        <end position="1008"/>
    </location>
</feature>
<feature type="helix" evidence="19">
    <location>
        <begin position="1012"/>
        <end position="1016"/>
    </location>
</feature>
<feature type="helix" evidence="19">
    <location>
        <begin position="1017"/>
        <end position="1020"/>
    </location>
</feature>
<feature type="turn" evidence="19">
    <location>
        <begin position="1021"/>
        <end position="1024"/>
    </location>
</feature>
<feature type="strand" evidence="19">
    <location>
        <begin position="1025"/>
        <end position="1033"/>
    </location>
</feature>
<feature type="strand" evidence="19">
    <location>
        <begin position="1055"/>
        <end position="1062"/>
    </location>
</feature>
<feature type="turn" evidence="19">
    <location>
        <begin position="1066"/>
        <end position="1069"/>
    </location>
</feature>
<feature type="helix" evidence="19">
    <location>
        <begin position="1070"/>
        <end position="1073"/>
    </location>
</feature>
<feature type="turn" evidence="19">
    <location>
        <begin position="1074"/>
        <end position="1077"/>
    </location>
</feature>
<feature type="helix" evidence="19">
    <location>
        <begin position="1080"/>
        <end position="1111"/>
    </location>
</feature>
<feature type="helix" evidence="19">
    <location>
        <begin position="1116"/>
        <end position="1128"/>
    </location>
</feature>
<keyword id="KW-0002">3D-structure</keyword>
<keyword id="KW-0067">ATP-binding</keyword>
<keyword id="KW-0227">DNA damage</keyword>
<keyword id="KW-0234">DNA repair</keyword>
<keyword id="KW-0238">DNA-binding</keyword>
<keyword id="KW-0547">Nucleotide-binding</keyword>
<keyword id="KW-0597">Phosphoprotein</keyword>
<keyword id="KW-1267">Proteomics identification</keyword>
<keyword id="KW-1185">Reference proteome</keyword>
<reference key="1">
    <citation type="journal article" date="1989" name="J. Biol. Chem.">
        <title>Isolation and characterization of cDNA clones derived from the divergently transcribed gene in the region upstream from the human dihydrofolate reductase gene.</title>
        <authorList>
            <person name="Fujii H."/>
            <person name="Shimada T."/>
        </authorList>
    </citation>
    <scope>NUCLEOTIDE SEQUENCE [MRNA]</scope>
    <scope>VARIANTS VAL-79; ARG-949 AND THR-1045</scope>
</reference>
<reference key="2">
    <citation type="journal article" date="1996" name="Proc. Natl. Acad. Sci. U.S.A.">
        <title>hMSH2 forms specific mispair-binding complexes with hMSH3 and hMSH6.</title>
        <authorList>
            <person name="Acharya S."/>
            <person name="Wilson T."/>
            <person name="Gradia S."/>
            <person name="Kane M.F."/>
            <person name="Guerrette S."/>
            <person name="Marsischky G.T."/>
            <person name="Kolodner R.D."/>
            <person name="Fishel R."/>
        </authorList>
    </citation>
    <scope>NUCLEOTIDE SEQUENCE [MRNA]</scope>
    <scope>INTERACTION WITH MSH2</scope>
    <scope>VARIANTS 57-ALA--ALA-65 DEL; VAL-79 AND ARG-949</scope>
</reference>
<reference key="3">
    <citation type="submission" date="2004-05" db="EMBL/GenBank/DDBJ databases">
        <authorList>
            <person name="Shimada T."/>
            <person name="Ikejima M."/>
            <person name="Watanabe A."/>
            <person name="Orimo H."/>
        </authorList>
    </citation>
    <scope>NUCLEOTIDE SEQUENCE [GENOMIC DNA]</scope>
    <scope>VARIANTS VAL-79; ARG-949 AND THR-1045</scope>
</reference>
<reference key="4">
    <citation type="submission" date="2003-04" db="EMBL/GenBank/DDBJ databases">
        <authorList>
            <consortium name="NIEHS SNPs program"/>
        </authorList>
    </citation>
    <scope>NUCLEOTIDE SEQUENCE [GENOMIC DNA]</scope>
    <scope>VARIANTS ALA-ALA-ALA-62 INS; VAL-79; LEU-709; ARG-949 AND THR-1045</scope>
</reference>
<reference key="5">
    <citation type="journal article" date="2004" name="Nature">
        <title>The DNA sequence and comparative analysis of human chromosome 5.</title>
        <authorList>
            <person name="Schmutz J."/>
            <person name="Martin J."/>
            <person name="Terry A."/>
            <person name="Couronne O."/>
            <person name="Grimwood J."/>
            <person name="Lowry S."/>
            <person name="Gordon L.A."/>
            <person name="Scott D."/>
            <person name="Xie G."/>
            <person name="Huang W."/>
            <person name="Hellsten U."/>
            <person name="Tran-Gyamfi M."/>
            <person name="She X."/>
            <person name="Prabhakar S."/>
            <person name="Aerts A."/>
            <person name="Altherr M."/>
            <person name="Bajorek E."/>
            <person name="Black S."/>
            <person name="Branscomb E."/>
            <person name="Caoile C."/>
            <person name="Challacombe J.F."/>
            <person name="Chan Y.M."/>
            <person name="Denys M."/>
            <person name="Detter J.C."/>
            <person name="Escobar J."/>
            <person name="Flowers D."/>
            <person name="Fotopulos D."/>
            <person name="Glavina T."/>
            <person name="Gomez M."/>
            <person name="Gonzales E."/>
            <person name="Goodstein D."/>
            <person name="Grigoriev I."/>
            <person name="Groza M."/>
            <person name="Hammon N."/>
            <person name="Hawkins T."/>
            <person name="Haydu L."/>
            <person name="Israni S."/>
            <person name="Jett J."/>
            <person name="Kadner K."/>
            <person name="Kimball H."/>
            <person name="Kobayashi A."/>
            <person name="Lopez F."/>
            <person name="Lou Y."/>
            <person name="Martinez D."/>
            <person name="Medina C."/>
            <person name="Morgan J."/>
            <person name="Nandkeshwar R."/>
            <person name="Noonan J.P."/>
            <person name="Pitluck S."/>
            <person name="Pollard M."/>
            <person name="Predki P."/>
            <person name="Priest J."/>
            <person name="Ramirez L."/>
            <person name="Retterer J."/>
            <person name="Rodriguez A."/>
            <person name="Rogers S."/>
            <person name="Salamov A."/>
            <person name="Salazar A."/>
            <person name="Thayer N."/>
            <person name="Tice H."/>
            <person name="Tsai M."/>
            <person name="Ustaszewska A."/>
            <person name="Vo N."/>
            <person name="Wheeler J."/>
            <person name="Wu K."/>
            <person name="Yang J."/>
            <person name="Dickson M."/>
            <person name="Cheng J.-F."/>
            <person name="Eichler E.E."/>
            <person name="Olsen A."/>
            <person name="Pennacchio L.A."/>
            <person name="Rokhsar D.S."/>
            <person name="Richardson P."/>
            <person name="Lucas S.M."/>
            <person name="Myers R.M."/>
            <person name="Rubin E.M."/>
        </authorList>
    </citation>
    <scope>NUCLEOTIDE SEQUENCE [LARGE SCALE GENOMIC DNA]</scope>
</reference>
<reference key="6">
    <citation type="journal article" date="2004" name="Genome Res.">
        <title>The status, quality, and expansion of the NIH full-length cDNA project: the Mammalian Gene Collection (MGC).</title>
        <authorList>
            <consortium name="The MGC Project Team"/>
        </authorList>
    </citation>
    <scope>NUCLEOTIDE SEQUENCE [LARGE SCALE MRNA]</scope>
    <scope>VARIANTS 57-ALA--ALA-65 DEL; VAL-79; ARG-949 AND THR-1045</scope>
    <source>
        <tissue>Muscle</tissue>
    </source>
</reference>
<reference key="7">
    <citation type="journal article" date="1996" name="Nat. Genet.">
        <title>Mutation of MSH3 in endometrial cancer and evidence for its functional role in heteroduplex repair.</title>
        <authorList>
            <person name="Risinger J.I."/>
            <person name="Umar A."/>
            <person name="Boyd J."/>
            <person name="Berchuck A."/>
            <person name="Kunkel T.A."/>
            <person name="Barrett J.C."/>
        </authorList>
    </citation>
    <scope>POSSIBLE INVOLVEMENT IN ENDMC</scope>
</reference>
<reference key="8">
    <citation type="journal article" date="2001" name="J. Biol. Chem.">
        <title>The interaction of DNA mismatch repair proteins with human exonuclease I.</title>
        <authorList>
            <person name="Schmutte C."/>
            <person name="Sadoff M.M."/>
            <person name="Shim K.-S."/>
            <person name="Acharya S."/>
            <person name="Fishel R."/>
        </authorList>
    </citation>
    <scope>INTERACTION WITH EXO1</scope>
</reference>
<reference key="9">
    <citation type="journal article" date="2010" name="Sci. Signal.">
        <title>Quantitative phosphoproteomics reveals widespread full phosphorylation site occupancy during mitosis.</title>
        <authorList>
            <person name="Olsen J.V."/>
            <person name="Vermeulen M."/>
            <person name="Santamaria A."/>
            <person name="Kumar C."/>
            <person name="Miller M.L."/>
            <person name="Jensen L.J."/>
            <person name="Gnad F."/>
            <person name="Cox J."/>
            <person name="Jensen T.S."/>
            <person name="Nigg E.A."/>
            <person name="Brunak S."/>
            <person name="Mann M."/>
        </authorList>
    </citation>
    <scope>PHOSPHORYLATION [LARGE SCALE ANALYSIS] AT THR-1099</scope>
    <scope>IDENTIFICATION BY MASS SPECTROMETRY [LARGE SCALE ANALYSIS]</scope>
    <source>
        <tissue>Cervix carcinoma</tissue>
    </source>
</reference>
<reference key="10">
    <citation type="journal article" date="2011" name="BMC Syst. Biol.">
        <title>Initial characterization of the human central proteome.</title>
        <authorList>
            <person name="Burkard T.R."/>
            <person name="Planyavsky M."/>
            <person name="Kaupe I."/>
            <person name="Breitwieser F.P."/>
            <person name="Buerckstuemmer T."/>
            <person name="Bennett K.L."/>
            <person name="Superti-Furga G."/>
            <person name="Colinge J."/>
        </authorList>
    </citation>
    <scope>IDENTIFICATION BY MASS SPECTROMETRY [LARGE SCALE ANALYSIS]</scope>
</reference>
<reference key="11">
    <citation type="journal article" date="2011" name="Sci. Signal.">
        <title>System-wide temporal characterization of the proteome and phosphoproteome of human embryonic stem cell differentiation.</title>
        <authorList>
            <person name="Rigbolt K.T."/>
            <person name="Prokhorova T.A."/>
            <person name="Akimov V."/>
            <person name="Henningsen J."/>
            <person name="Johansen P.T."/>
            <person name="Kratchmarova I."/>
            <person name="Kassem M."/>
            <person name="Mann M."/>
            <person name="Olsen J.V."/>
            <person name="Blagoev B."/>
        </authorList>
    </citation>
    <scope>PHOSPHORYLATION [LARGE SCALE ANALYSIS] AT THR-1099</scope>
    <scope>IDENTIFICATION BY MASS SPECTROMETRY [LARGE SCALE ANALYSIS]</scope>
</reference>
<reference key="12">
    <citation type="journal article" date="2013" name="J. Proteome Res.">
        <title>Toward a comprehensive characterization of a human cancer cell phosphoproteome.</title>
        <authorList>
            <person name="Zhou H."/>
            <person name="Di Palma S."/>
            <person name="Preisinger C."/>
            <person name="Peng M."/>
            <person name="Polat A.N."/>
            <person name="Heck A.J."/>
            <person name="Mohammed S."/>
        </authorList>
    </citation>
    <scope>PHOSPHORYLATION [LARGE SCALE ANALYSIS] AT SER-33</scope>
    <scope>IDENTIFICATION BY MASS SPECTROMETRY [LARGE SCALE ANALYSIS]</scope>
    <source>
        <tissue>Cervix carcinoma</tissue>
        <tissue>Erythroleukemia</tissue>
    </source>
</reference>
<reference key="13">
    <citation type="journal article" date="2015" name="Mol. Cell">
        <title>MCM9 Is Required for Mammalian DNA Mismatch Repair.</title>
        <authorList>
            <person name="Traver S."/>
            <person name="Coulombe P."/>
            <person name="Peiffer I."/>
            <person name="Hutchins J.R."/>
            <person name="Kitzmann M."/>
            <person name="Latreille D."/>
            <person name="Mechali M."/>
        </authorList>
    </citation>
    <scope>IDENTIFICATION IN THE MMR COMPLEX</scope>
    <scope>INTERACTION WITH MCM9</scope>
</reference>
<reference key="14">
    <citation type="journal article" date="1995" name="Jpn. J. Hum. Genet.">
        <title>Nine-bp repeat polymorphism in exon 1 of the hMSH3 gene.</title>
        <authorList>
            <person name="Nakajima E."/>
            <person name="Orimo H."/>
            <person name="Ikejima M."/>
            <person name="Shimada T."/>
        </authorList>
    </citation>
    <scope>VARIANT ALA-ALA-ALA-62 INS</scope>
</reference>
<reference key="15">
    <citation type="journal article" date="2000" name="J. Hum. Genet.">
        <title>Association between single nucleotide polymorphisms in the hMSH3 gene and sporadic colon cancer with microsatellite instability.</title>
        <authorList>
            <person name="Orimo H."/>
            <person name="Nakajima E."/>
            <person name="Yamamoto M."/>
            <person name="Ikejima M."/>
            <person name="Emi M."/>
            <person name="Shimada T."/>
        </authorList>
    </citation>
    <scope>VARIANTS VAL-79 AND THR-1045</scope>
</reference>
<reference key="16">
    <citation type="journal article" date="2016" name="Am. J. Hum. Genet.">
        <title>Exome Sequencing Identifies Biallelic MSH3 Germline Mutations as a Recessive Subtype of Colorectal Adenomatous Polyposis.</title>
        <authorList>
            <person name="Adam R."/>
            <person name="Spier I."/>
            <person name="Zhao B."/>
            <person name="Kloth M."/>
            <person name="Marquez J."/>
            <person name="Hinrichsen I."/>
            <person name="Kirfel J."/>
            <person name="Tafazzoli A."/>
            <person name="Horpaopan S."/>
            <person name="Uhlhaas S."/>
            <person name="Stienen D."/>
            <person name="Friedrichs N."/>
            <person name="Altmueller J."/>
            <person name="Laner A."/>
            <person name="Holzapfel S."/>
            <person name="Peters S."/>
            <person name="Kayser K."/>
            <person name="Thiele H."/>
            <person name="Holinski-Feder E."/>
            <person name="Marra G."/>
            <person name="Kristiansen G."/>
            <person name="Noethen M.M."/>
            <person name="Buettner R."/>
            <person name="Moeslein G."/>
            <person name="Betz R.C."/>
            <person name="Brieger A."/>
            <person name="Lifton R.P."/>
            <person name="Aretz S."/>
        </authorList>
    </citation>
    <scope>INVOLVEMENT IN FAP4</scope>
</reference>
<gene>
    <name type="primary">MSH3</name>
    <name type="synonym">DUC1</name>
    <name type="synonym">DUG</name>
</gene>